<evidence type="ECO:0000255" key="1">
    <source>
        <dbReference type="HAMAP-Rule" id="MF_00563"/>
    </source>
</evidence>
<dbReference type="EC" id="3.13.2.1" evidence="1"/>
<dbReference type="EMBL" id="AL583919">
    <property type="protein sequence ID" value="CAC30280.1"/>
    <property type="molecule type" value="Genomic_DNA"/>
</dbReference>
<dbReference type="PIR" id="D87005">
    <property type="entry name" value="D87005"/>
</dbReference>
<dbReference type="RefSeq" id="NP_301595.1">
    <property type="nucleotide sequence ID" value="NC_002677.1"/>
</dbReference>
<dbReference type="RefSeq" id="WP_010907919.1">
    <property type="nucleotide sequence ID" value="NC_002677.1"/>
</dbReference>
<dbReference type="SMR" id="Q9CCJ4"/>
<dbReference type="STRING" id="272631.gene:17574595"/>
<dbReference type="KEGG" id="mle:ML0771"/>
<dbReference type="PATRIC" id="fig|272631.5.peg.1389"/>
<dbReference type="Leproma" id="ML0771"/>
<dbReference type="eggNOG" id="COG0499">
    <property type="taxonomic scope" value="Bacteria"/>
</dbReference>
<dbReference type="HOGENOM" id="CLU_025194_2_1_11"/>
<dbReference type="OrthoDB" id="9802717at2"/>
<dbReference type="UniPathway" id="UPA00314">
    <property type="reaction ID" value="UER00076"/>
</dbReference>
<dbReference type="Proteomes" id="UP000000806">
    <property type="component" value="Chromosome"/>
</dbReference>
<dbReference type="GO" id="GO:0005829">
    <property type="term" value="C:cytosol"/>
    <property type="evidence" value="ECO:0007669"/>
    <property type="project" value="TreeGrafter"/>
</dbReference>
<dbReference type="GO" id="GO:0004013">
    <property type="term" value="F:adenosylhomocysteinase activity"/>
    <property type="evidence" value="ECO:0007669"/>
    <property type="project" value="UniProtKB-UniRule"/>
</dbReference>
<dbReference type="GO" id="GO:0071269">
    <property type="term" value="P:L-homocysteine biosynthetic process"/>
    <property type="evidence" value="ECO:0007669"/>
    <property type="project" value="UniProtKB-UniRule"/>
</dbReference>
<dbReference type="GO" id="GO:0006730">
    <property type="term" value="P:one-carbon metabolic process"/>
    <property type="evidence" value="ECO:0007669"/>
    <property type="project" value="UniProtKB-KW"/>
</dbReference>
<dbReference type="GO" id="GO:0033353">
    <property type="term" value="P:S-adenosylmethionine cycle"/>
    <property type="evidence" value="ECO:0007669"/>
    <property type="project" value="TreeGrafter"/>
</dbReference>
<dbReference type="CDD" id="cd00401">
    <property type="entry name" value="SAHH"/>
    <property type="match status" value="1"/>
</dbReference>
<dbReference type="FunFam" id="3.40.50.720:FF:000004">
    <property type="entry name" value="Adenosylhomocysteinase"/>
    <property type="match status" value="1"/>
</dbReference>
<dbReference type="Gene3D" id="3.40.50.1480">
    <property type="entry name" value="Adenosylhomocysteinase-like"/>
    <property type="match status" value="1"/>
</dbReference>
<dbReference type="Gene3D" id="3.40.50.720">
    <property type="entry name" value="NAD(P)-binding Rossmann-like Domain"/>
    <property type="match status" value="1"/>
</dbReference>
<dbReference type="HAMAP" id="MF_00563">
    <property type="entry name" value="AdoHcyase"/>
    <property type="match status" value="1"/>
</dbReference>
<dbReference type="InterPro" id="IPR042172">
    <property type="entry name" value="Adenosylhomocyst_ase-like_sf"/>
</dbReference>
<dbReference type="InterPro" id="IPR000043">
    <property type="entry name" value="Adenosylhomocysteinase-like"/>
</dbReference>
<dbReference type="InterPro" id="IPR015878">
    <property type="entry name" value="Ado_hCys_hydrolase_NAD-bd"/>
</dbReference>
<dbReference type="InterPro" id="IPR036291">
    <property type="entry name" value="NAD(P)-bd_dom_sf"/>
</dbReference>
<dbReference type="InterPro" id="IPR020082">
    <property type="entry name" value="S-Ado-L-homoCys_hydrolase_CS"/>
</dbReference>
<dbReference type="NCBIfam" id="TIGR00936">
    <property type="entry name" value="ahcY"/>
    <property type="match status" value="1"/>
</dbReference>
<dbReference type="NCBIfam" id="NF004005">
    <property type="entry name" value="PRK05476.2-3"/>
    <property type="match status" value="1"/>
</dbReference>
<dbReference type="PANTHER" id="PTHR23420">
    <property type="entry name" value="ADENOSYLHOMOCYSTEINASE"/>
    <property type="match status" value="1"/>
</dbReference>
<dbReference type="PANTHER" id="PTHR23420:SF0">
    <property type="entry name" value="ADENOSYLHOMOCYSTEINASE"/>
    <property type="match status" value="1"/>
</dbReference>
<dbReference type="Pfam" id="PF05221">
    <property type="entry name" value="AdoHcyase"/>
    <property type="match status" value="1"/>
</dbReference>
<dbReference type="Pfam" id="PF00670">
    <property type="entry name" value="AdoHcyase_NAD"/>
    <property type="match status" value="1"/>
</dbReference>
<dbReference type="PIRSF" id="PIRSF001109">
    <property type="entry name" value="Ad_hcy_hydrolase"/>
    <property type="match status" value="1"/>
</dbReference>
<dbReference type="SMART" id="SM00996">
    <property type="entry name" value="AdoHcyase"/>
    <property type="match status" value="1"/>
</dbReference>
<dbReference type="SMART" id="SM00997">
    <property type="entry name" value="AdoHcyase_NAD"/>
    <property type="match status" value="1"/>
</dbReference>
<dbReference type="SUPFAM" id="SSF52283">
    <property type="entry name" value="Formate/glycerate dehydrogenase catalytic domain-like"/>
    <property type="match status" value="1"/>
</dbReference>
<dbReference type="SUPFAM" id="SSF51735">
    <property type="entry name" value="NAD(P)-binding Rossmann-fold domains"/>
    <property type="match status" value="1"/>
</dbReference>
<dbReference type="PROSITE" id="PS00738">
    <property type="entry name" value="ADOHCYASE_1"/>
    <property type="match status" value="1"/>
</dbReference>
<dbReference type="PROSITE" id="PS00739">
    <property type="entry name" value="ADOHCYASE_2"/>
    <property type="match status" value="1"/>
</dbReference>
<reference key="1">
    <citation type="journal article" date="2001" name="Nature">
        <title>Massive gene decay in the leprosy bacillus.</title>
        <authorList>
            <person name="Cole S.T."/>
            <person name="Eiglmeier K."/>
            <person name="Parkhill J."/>
            <person name="James K.D."/>
            <person name="Thomson N.R."/>
            <person name="Wheeler P.R."/>
            <person name="Honore N."/>
            <person name="Garnier T."/>
            <person name="Churcher C.M."/>
            <person name="Harris D.E."/>
            <person name="Mungall K.L."/>
            <person name="Basham D."/>
            <person name="Brown D."/>
            <person name="Chillingworth T."/>
            <person name="Connor R."/>
            <person name="Davies R.M."/>
            <person name="Devlin K."/>
            <person name="Duthoy S."/>
            <person name="Feltwell T."/>
            <person name="Fraser A."/>
            <person name="Hamlin N."/>
            <person name="Holroyd S."/>
            <person name="Hornsby T."/>
            <person name="Jagels K."/>
            <person name="Lacroix C."/>
            <person name="Maclean J."/>
            <person name="Moule S."/>
            <person name="Murphy L.D."/>
            <person name="Oliver K."/>
            <person name="Quail M.A."/>
            <person name="Rajandream M.A."/>
            <person name="Rutherford K.M."/>
            <person name="Rutter S."/>
            <person name="Seeger K."/>
            <person name="Simon S."/>
            <person name="Simmonds M."/>
            <person name="Skelton J."/>
            <person name="Squares R."/>
            <person name="Squares S."/>
            <person name="Stevens K."/>
            <person name="Taylor K."/>
            <person name="Whitehead S."/>
            <person name="Woodward J.R."/>
            <person name="Barrell B.G."/>
        </authorList>
    </citation>
    <scope>NUCLEOTIDE SEQUENCE [LARGE SCALE GENOMIC DNA]</scope>
    <source>
        <strain>TN</strain>
    </source>
</reference>
<feature type="chain" id="PRO_0000116968" description="Adenosylhomocysteinase">
    <location>
        <begin position="1"/>
        <end position="492"/>
    </location>
</feature>
<feature type="binding site" evidence="1">
    <location>
        <position position="68"/>
    </location>
    <ligand>
        <name>substrate</name>
    </ligand>
</feature>
<feature type="binding site" evidence="1">
    <location>
        <position position="153"/>
    </location>
    <ligand>
        <name>substrate</name>
    </ligand>
</feature>
<feature type="binding site" evidence="1">
    <location>
        <position position="215"/>
    </location>
    <ligand>
        <name>substrate</name>
    </ligand>
</feature>
<feature type="binding site" evidence="1">
    <location>
        <begin position="216"/>
        <end position="218"/>
    </location>
    <ligand>
        <name>NAD(+)</name>
        <dbReference type="ChEBI" id="CHEBI:57540"/>
    </ligand>
</feature>
<feature type="binding site" evidence="1">
    <location>
        <position position="245"/>
    </location>
    <ligand>
        <name>substrate</name>
    </ligand>
</feature>
<feature type="binding site" evidence="1">
    <location>
        <position position="249"/>
    </location>
    <ligand>
        <name>substrate</name>
    </ligand>
</feature>
<feature type="binding site" evidence="1">
    <location>
        <position position="250"/>
    </location>
    <ligand>
        <name>NAD(+)</name>
        <dbReference type="ChEBI" id="CHEBI:57540"/>
    </ligand>
</feature>
<feature type="binding site" evidence="1">
    <location>
        <begin position="279"/>
        <end position="284"/>
    </location>
    <ligand>
        <name>NAD(+)</name>
        <dbReference type="ChEBI" id="CHEBI:57540"/>
    </ligand>
</feature>
<feature type="binding site" evidence="1">
    <location>
        <position position="302"/>
    </location>
    <ligand>
        <name>NAD(+)</name>
        <dbReference type="ChEBI" id="CHEBI:57540"/>
    </ligand>
</feature>
<feature type="binding site" evidence="1">
    <location>
        <position position="337"/>
    </location>
    <ligand>
        <name>NAD(+)</name>
        <dbReference type="ChEBI" id="CHEBI:57540"/>
    </ligand>
</feature>
<feature type="binding site" evidence="1">
    <location>
        <begin position="358"/>
        <end position="360"/>
    </location>
    <ligand>
        <name>NAD(+)</name>
        <dbReference type="ChEBI" id="CHEBI:57540"/>
    </ligand>
</feature>
<feature type="binding site" evidence="1">
    <location>
        <position position="406"/>
    </location>
    <ligand>
        <name>NAD(+)</name>
        <dbReference type="ChEBI" id="CHEBI:57540"/>
    </ligand>
</feature>
<protein>
    <recommendedName>
        <fullName evidence="1">Adenosylhomocysteinase</fullName>
        <ecNumber evidence="1">3.13.2.1</ecNumber>
    </recommendedName>
    <alternativeName>
        <fullName evidence="1">S-adenosyl-L-homocysteine hydrolase</fullName>
        <shortName evidence="1">AdoHcyase</shortName>
    </alternativeName>
</protein>
<accession>Q9CCJ4</accession>
<keyword id="KW-0963">Cytoplasm</keyword>
<keyword id="KW-0378">Hydrolase</keyword>
<keyword id="KW-0520">NAD</keyword>
<keyword id="KW-0554">One-carbon metabolism</keyword>
<keyword id="KW-1185">Reference proteome</keyword>
<proteinExistence type="inferred from homology"/>
<organism>
    <name type="scientific">Mycobacterium leprae (strain TN)</name>
    <dbReference type="NCBI Taxonomy" id="272631"/>
    <lineage>
        <taxon>Bacteria</taxon>
        <taxon>Bacillati</taxon>
        <taxon>Actinomycetota</taxon>
        <taxon>Actinomycetes</taxon>
        <taxon>Mycobacteriales</taxon>
        <taxon>Mycobacteriaceae</taxon>
        <taxon>Mycobacterium</taxon>
    </lineage>
</organism>
<gene>
    <name evidence="1" type="primary">ahcY</name>
    <name type="synonym">sahH</name>
    <name type="ordered locus">ML0771</name>
</gene>
<name>SAHH_MYCLE</name>
<sequence length="492" mass="53986">MTTTENSLMPDVRNGIDFKVADLSLANFGRKELDLAEYEMPGLMSLRHEYAEVQPLKGARISGSLHMTVQTAVLIETLTALGAEVRWASCNIFSTQDHAAAAVVVGPYGTPEEPKGVPVFAWKGETLEEYWWAAEQMLTWPDPDKPVNMILDDGGDATMLVLRGVQYEKAGVVPPAEVDDSAEWKVFLNLLRKRFETDKGKWTKIAKSVKGVTEETTTGVLRLYQFAAAGDLAFPAINVNDSVTKSKFDNKYGTRHSLIDGINRGTDSLIGGKNVLICGYGDVGKGCAEAAKGQGARVTITEIDPINALQALMEGFDVKRVEDVIADSDIVVTATGNKDIILLEHMKAMKDHAILGNIGHFDNEIDMAALERSGATRLNIKPQVDLWTFGDSGKSIIVLSEGRLLNLGNATGHPSFVMSNSFANQTIAQIELWTKNDDYDNEVYRLPKHLDEKVARVHVEALGGQLTKLTKDQAEYLGVDVDGPFKPDHYRY</sequence>
<comment type="function">
    <text evidence="1">May play a key role in the regulation of the intracellular concentration of adenosylhomocysteine.</text>
</comment>
<comment type="catalytic activity">
    <reaction evidence="1">
        <text>S-adenosyl-L-homocysteine + H2O = L-homocysteine + adenosine</text>
        <dbReference type="Rhea" id="RHEA:21708"/>
        <dbReference type="ChEBI" id="CHEBI:15377"/>
        <dbReference type="ChEBI" id="CHEBI:16335"/>
        <dbReference type="ChEBI" id="CHEBI:57856"/>
        <dbReference type="ChEBI" id="CHEBI:58199"/>
        <dbReference type="EC" id="3.13.2.1"/>
    </reaction>
</comment>
<comment type="cofactor">
    <cofactor evidence="1">
        <name>NAD(+)</name>
        <dbReference type="ChEBI" id="CHEBI:57540"/>
    </cofactor>
    <text evidence="1">Binds 1 NAD(+) per subunit.</text>
</comment>
<comment type="pathway">
    <text evidence="1">Amino-acid biosynthesis; L-homocysteine biosynthesis; L-homocysteine from S-adenosyl-L-homocysteine: step 1/1.</text>
</comment>
<comment type="subcellular location">
    <subcellularLocation>
        <location evidence="1">Cytoplasm</location>
    </subcellularLocation>
</comment>
<comment type="similarity">
    <text evidence="1">Belongs to the adenosylhomocysteinase family.</text>
</comment>